<sequence>MKIQLIAVGTKMPDWVTKGFEEYQRRFPKDMPFELIEIPAGKRGKNADIKRILEQEGKAMLSACQKSRIITLDIPGKPWTTEQLAQQLEAWKHDGRNVALLIGGPEGLSPECKAATEQSWSLSPLTLPHPLVRIIVAESLYRAWSLSTNHPYHRE</sequence>
<proteinExistence type="inferred from homology"/>
<gene>
    <name evidence="1" type="primary">rlmH</name>
    <name type="ordered locus">HS_0322</name>
</gene>
<name>RLMH_HISS1</name>
<reference key="1">
    <citation type="journal article" date="2007" name="J. Bacteriol.">
        <title>Complete genome sequence of Haemophilus somnus (Histophilus somni) strain 129Pt and comparison to Haemophilus ducreyi 35000HP and Haemophilus influenzae Rd.</title>
        <authorList>
            <person name="Challacombe J.F."/>
            <person name="Duncan A.J."/>
            <person name="Brettin T.S."/>
            <person name="Bruce D."/>
            <person name="Chertkov O."/>
            <person name="Detter J.C."/>
            <person name="Han C.S."/>
            <person name="Misra M."/>
            <person name="Richardson P."/>
            <person name="Tapia R."/>
            <person name="Thayer N."/>
            <person name="Xie G."/>
            <person name="Inzana T.J."/>
        </authorList>
    </citation>
    <scope>NUCLEOTIDE SEQUENCE [LARGE SCALE GENOMIC DNA]</scope>
    <source>
        <strain>129Pt</strain>
    </source>
</reference>
<keyword id="KW-0963">Cytoplasm</keyword>
<keyword id="KW-0489">Methyltransferase</keyword>
<keyword id="KW-0698">rRNA processing</keyword>
<keyword id="KW-0949">S-adenosyl-L-methionine</keyword>
<keyword id="KW-0808">Transferase</keyword>
<organism>
    <name type="scientific">Histophilus somni (strain 129Pt)</name>
    <name type="common">Haemophilus somnus</name>
    <dbReference type="NCBI Taxonomy" id="205914"/>
    <lineage>
        <taxon>Bacteria</taxon>
        <taxon>Pseudomonadati</taxon>
        <taxon>Pseudomonadota</taxon>
        <taxon>Gammaproteobacteria</taxon>
        <taxon>Pasteurellales</taxon>
        <taxon>Pasteurellaceae</taxon>
        <taxon>Histophilus</taxon>
    </lineage>
</organism>
<evidence type="ECO:0000255" key="1">
    <source>
        <dbReference type="HAMAP-Rule" id="MF_00658"/>
    </source>
</evidence>
<comment type="function">
    <text evidence="1">Specifically methylates the pseudouridine at position 1915 (m3Psi1915) in 23S rRNA.</text>
</comment>
<comment type="catalytic activity">
    <reaction evidence="1">
        <text>pseudouridine(1915) in 23S rRNA + S-adenosyl-L-methionine = N(3)-methylpseudouridine(1915) in 23S rRNA + S-adenosyl-L-homocysteine + H(+)</text>
        <dbReference type="Rhea" id="RHEA:42752"/>
        <dbReference type="Rhea" id="RHEA-COMP:10221"/>
        <dbReference type="Rhea" id="RHEA-COMP:10222"/>
        <dbReference type="ChEBI" id="CHEBI:15378"/>
        <dbReference type="ChEBI" id="CHEBI:57856"/>
        <dbReference type="ChEBI" id="CHEBI:59789"/>
        <dbReference type="ChEBI" id="CHEBI:65314"/>
        <dbReference type="ChEBI" id="CHEBI:74486"/>
        <dbReference type="EC" id="2.1.1.177"/>
    </reaction>
</comment>
<comment type="subunit">
    <text evidence="1">Homodimer.</text>
</comment>
<comment type="subcellular location">
    <subcellularLocation>
        <location evidence="1">Cytoplasm</location>
    </subcellularLocation>
</comment>
<comment type="similarity">
    <text evidence="1">Belongs to the RNA methyltransferase RlmH family.</text>
</comment>
<dbReference type="EC" id="2.1.1.177" evidence="1"/>
<dbReference type="EMBL" id="CP000436">
    <property type="protein sequence ID" value="ABI24600.1"/>
    <property type="molecule type" value="Genomic_DNA"/>
</dbReference>
<dbReference type="SMR" id="Q0I1H1"/>
<dbReference type="KEGG" id="hso:HS_0322"/>
<dbReference type="eggNOG" id="COG1576">
    <property type="taxonomic scope" value="Bacteria"/>
</dbReference>
<dbReference type="HOGENOM" id="CLU_100552_1_0_6"/>
<dbReference type="GO" id="GO:0005737">
    <property type="term" value="C:cytoplasm"/>
    <property type="evidence" value="ECO:0007669"/>
    <property type="project" value="UniProtKB-SubCell"/>
</dbReference>
<dbReference type="GO" id="GO:0070038">
    <property type="term" value="F:rRNA (pseudouridine-N3-)-methyltransferase activity"/>
    <property type="evidence" value="ECO:0007669"/>
    <property type="project" value="UniProtKB-UniRule"/>
</dbReference>
<dbReference type="CDD" id="cd18081">
    <property type="entry name" value="RlmH-like"/>
    <property type="match status" value="1"/>
</dbReference>
<dbReference type="Gene3D" id="3.40.1280.10">
    <property type="match status" value="1"/>
</dbReference>
<dbReference type="HAMAP" id="MF_00658">
    <property type="entry name" value="23SrRNA_methyltr_H"/>
    <property type="match status" value="1"/>
</dbReference>
<dbReference type="InterPro" id="IPR029028">
    <property type="entry name" value="Alpha/beta_knot_MTases"/>
</dbReference>
<dbReference type="InterPro" id="IPR003742">
    <property type="entry name" value="RlmH-like"/>
</dbReference>
<dbReference type="InterPro" id="IPR029026">
    <property type="entry name" value="tRNA_m1G_MTases_N"/>
</dbReference>
<dbReference type="NCBIfam" id="NF000984">
    <property type="entry name" value="PRK00103.1-1"/>
    <property type="match status" value="1"/>
</dbReference>
<dbReference type="NCBIfam" id="NF000986">
    <property type="entry name" value="PRK00103.1-4"/>
    <property type="match status" value="1"/>
</dbReference>
<dbReference type="NCBIfam" id="TIGR00246">
    <property type="entry name" value="tRNA_RlmH_YbeA"/>
    <property type="match status" value="1"/>
</dbReference>
<dbReference type="PANTHER" id="PTHR33603">
    <property type="entry name" value="METHYLTRANSFERASE"/>
    <property type="match status" value="1"/>
</dbReference>
<dbReference type="PANTHER" id="PTHR33603:SF1">
    <property type="entry name" value="RIBOSOMAL RNA LARGE SUBUNIT METHYLTRANSFERASE H"/>
    <property type="match status" value="1"/>
</dbReference>
<dbReference type="Pfam" id="PF02590">
    <property type="entry name" value="SPOUT_MTase"/>
    <property type="match status" value="1"/>
</dbReference>
<dbReference type="PIRSF" id="PIRSF004505">
    <property type="entry name" value="MT_bac"/>
    <property type="match status" value="1"/>
</dbReference>
<dbReference type="SUPFAM" id="SSF75217">
    <property type="entry name" value="alpha/beta knot"/>
    <property type="match status" value="1"/>
</dbReference>
<accession>Q0I1H1</accession>
<feature type="chain" id="PRO_0000260560" description="Ribosomal RNA large subunit methyltransferase H">
    <location>
        <begin position="1"/>
        <end position="155"/>
    </location>
</feature>
<feature type="binding site" evidence="1">
    <location>
        <position position="72"/>
    </location>
    <ligand>
        <name>S-adenosyl-L-methionine</name>
        <dbReference type="ChEBI" id="CHEBI:59789"/>
    </ligand>
</feature>
<feature type="binding site" evidence="1">
    <location>
        <position position="103"/>
    </location>
    <ligand>
        <name>S-adenosyl-L-methionine</name>
        <dbReference type="ChEBI" id="CHEBI:59789"/>
    </ligand>
</feature>
<feature type="binding site" evidence="1">
    <location>
        <begin position="122"/>
        <end position="127"/>
    </location>
    <ligand>
        <name>S-adenosyl-L-methionine</name>
        <dbReference type="ChEBI" id="CHEBI:59789"/>
    </ligand>
</feature>
<protein>
    <recommendedName>
        <fullName evidence="1">Ribosomal RNA large subunit methyltransferase H</fullName>
        <ecNumber evidence="1">2.1.1.177</ecNumber>
    </recommendedName>
    <alternativeName>
        <fullName evidence="1">23S rRNA (pseudouridine1915-N3)-methyltransferase</fullName>
    </alternativeName>
    <alternativeName>
        <fullName evidence="1">23S rRNA m3Psi1915 methyltransferase</fullName>
    </alternativeName>
    <alternativeName>
        <fullName evidence="1">rRNA (pseudouridine-N3-)-methyltransferase RlmH</fullName>
    </alternativeName>
</protein>